<accession>B0RUW1</accession>
<protein>
    <recommendedName>
        <fullName evidence="1">3-phosphoshikimate 1-carboxyvinyltransferase</fullName>
        <ecNumber evidence="1">2.5.1.19</ecNumber>
    </recommendedName>
    <alternativeName>
        <fullName evidence="1">5-enolpyruvylshikimate-3-phosphate synthase</fullName>
        <shortName evidence="1">EPSP synthase</shortName>
        <shortName evidence="1">EPSPS</shortName>
    </alternativeName>
</protein>
<sequence length="438" mass="45231">MSNSTQHWIAQRGTALQGSLTIPGDKSVSHRAVMFAALADGTSKIDGFLEGEDTRSTAAIFAQLGVRIETPSASQRIVHGVGVDGLQPPQGPLDCGNAGTGMRLLAGVLAAQRFDSVLVGDASLSKRPMRRVTDPLAQMGARIETESDGTPPLRVHGGQALQGITFASPVASAQVKSAVLLAGLYATGETSVSEPHPTRDYTERMLSAFGVEIAFSPGQARLRGGQRLRATDIAVPADFSSAAFFIVAASIIPGSDVTLRAVGLNPRRTGLLAALRLMGADIVEDNHAEHGGEPVADLRVRYAPLRGAQIPEALVPDMIDEFPALFVAAAAARGDTVVSGAAELRVKESDRLAAMATGLRALGIVVDEKPDGATIHGGTLGSGVIESHGDHRIAMAFAIAGQLSTGTVQVNDVANVATSFPGFDSLAQGAGFGLSARP</sequence>
<reference key="1">
    <citation type="journal article" date="2008" name="J. Biotechnol.">
        <title>The genome of Xanthomonas campestris pv. campestris B100 and its use for the reconstruction of metabolic pathways involved in xanthan biosynthesis.</title>
        <authorList>
            <person name="Vorhoelter F.-J."/>
            <person name="Schneiker S."/>
            <person name="Goesmann A."/>
            <person name="Krause L."/>
            <person name="Bekel T."/>
            <person name="Kaiser O."/>
            <person name="Linke B."/>
            <person name="Patschkowski T."/>
            <person name="Rueckert C."/>
            <person name="Schmid J."/>
            <person name="Sidhu V.K."/>
            <person name="Sieber V."/>
            <person name="Tauch A."/>
            <person name="Watt S.A."/>
            <person name="Weisshaar B."/>
            <person name="Becker A."/>
            <person name="Niehaus K."/>
            <person name="Puehler A."/>
        </authorList>
    </citation>
    <scope>NUCLEOTIDE SEQUENCE [LARGE SCALE GENOMIC DNA]</scope>
    <source>
        <strain>B100</strain>
    </source>
</reference>
<comment type="function">
    <text evidence="1">Catalyzes the transfer of the enolpyruvyl moiety of phosphoenolpyruvate (PEP) to the 5-hydroxyl of shikimate-3-phosphate (S3P) to produce enolpyruvyl shikimate-3-phosphate and inorganic phosphate.</text>
</comment>
<comment type="catalytic activity">
    <reaction evidence="1">
        <text>3-phosphoshikimate + phosphoenolpyruvate = 5-O-(1-carboxyvinyl)-3-phosphoshikimate + phosphate</text>
        <dbReference type="Rhea" id="RHEA:21256"/>
        <dbReference type="ChEBI" id="CHEBI:43474"/>
        <dbReference type="ChEBI" id="CHEBI:57701"/>
        <dbReference type="ChEBI" id="CHEBI:58702"/>
        <dbReference type="ChEBI" id="CHEBI:145989"/>
        <dbReference type="EC" id="2.5.1.19"/>
    </reaction>
    <physiologicalReaction direction="left-to-right" evidence="1">
        <dbReference type="Rhea" id="RHEA:21257"/>
    </physiologicalReaction>
</comment>
<comment type="pathway">
    <text evidence="1">Metabolic intermediate biosynthesis; chorismate biosynthesis; chorismate from D-erythrose 4-phosphate and phosphoenolpyruvate: step 6/7.</text>
</comment>
<comment type="subunit">
    <text evidence="1">Monomer.</text>
</comment>
<comment type="subcellular location">
    <subcellularLocation>
        <location evidence="1">Cytoplasm</location>
    </subcellularLocation>
</comment>
<comment type="similarity">
    <text evidence="1">Belongs to the EPSP synthase family.</text>
</comment>
<dbReference type="EC" id="2.5.1.19" evidence="1"/>
<dbReference type="EMBL" id="AM920689">
    <property type="protein sequence ID" value="CAP52030.1"/>
    <property type="molecule type" value="Genomic_DNA"/>
</dbReference>
<dbReference type="SMR" id="B0RUW1"/>
<dbReference type="KEGG" id="xca:xcc-b100_2669"/>
<dbReference type="HOGENOM" id="CLU_024321_0_1_6"/>
<dbReference type="UniPathway" id="UPA00053">
    <property type="reaction ID" value="UER00089"/>
</dbReference>
<dbReference type="Proteomes" id="UP000001188">
    <property type="component" value="Chromosome"/>
</dbReference>
<dbReference type="GO" id="GO:0005737">
    <property type="term" value="C:cytoplasm"/>
    <property type="evidence" value="ECO:0007669"/>
    <property type="project" value="UniProtKB-SubCell"/>
</dbReference>
<dbReference type="GO" id="GO:0003866">
    <property type="term" value="F:3-phosphoshikimate 1-carboxyvinyltransferase activity"/>
    <property type="evidence" value="ECO:0007669"/>
    <property type="project" value="UniProtKB-UniRule"/>
</dbReference>
<dbReference type="GO" id="GO:0008652">
    <property type="term" value="P:amino acid biosynthetic process"/>
    <property type="evidence" value="ECO:0007669"/>
    <property type="project" value="UniProtKB-KW"/>
</dbReference>
<dbReference type="GO" id="GO:0009073">
    <property type="term" value="P:aromatic amino acid family biosynthetic process"/>
    <property type="evidence" value="ECO:0007669"/>
    <property type="project" value="UniProtKB-KW"/>
</dbReference>
<dbReference type="GO" id="GO:0009423">
    <property type="term" value="P:chorismate biosynthetic process"/>
    <property type="evidence" value="ECO:0007669"/>
    <property type="project" value="UniProtKB-UniRule"/>
</dbReference>
<dbReference type="CDD" id="cd01556">
    <property type="entry name" value="EPSP_synthase"/>
    <property type="match status" value="1"/>
</dbReference>
<dbReference type="FunFam" id="3.65.10.10:FF:000005">
    <property type="entry name" value="3-phosphoshikimate 1-carboxyvinyltransferase"/>
    <property type="match status" value="1"/>
</dbReference>
<dbReference type="FunFam" id="3.65.10.10:FF:000006">
    <property type="entry name" value="3-phosphoshikimate 1-carboxyvinyltransferase"/>
    <property type="match status" value="1"/>
</dbReference>
<dbReference type="Gene3D" id="3.65.10.10">
    <property type="entry name" value="Enolpyruvate transferase domain"/>
    <property type="match status" value="2"/>
</dbReference>
<dbReference type="HAMAP" id="MF_00210">
    <property type="entry name" value="EPSP_synth"/>
    <property type="match status" value="1"/>
</dbReference>
<dbReference type="InterPro" id="IPR001986">
    <property type="entry name" value="Enolpyruvate_Tfrase_dom"/>
</dbReference>
<dbReference type="InterPro" id="IPR036968">
    <property type="entry name" value="Enolpyruvate_Tfrase_sf"/>
</dbReference>
<dbReference type="InterPro" id="IPR006264">
    <property type="entry name" value="EPSP_synthase"/>
</dbReference>
<dbReference type="InterPro" id="IPR023193">
    <property type="entry name" value="EPSP_synthase_CS"/>
</dbReference>
<dbReference type="InterPro" id="IPR013792">
    <property type="entry name" value="RNA3'P_cycl/enolpyr_Trfase_a/b"/>
</dbReference>
<dbReference type="NCBIfam" id="TIGR01356">
    <property type="entry name" value="aroA"/>
    <property type="match status" value="1"/>
</dbReference>
<dbReference type="PANTHER" id="PTHR21090">
    <property type="entry name" value="AROM/DEHYDROQUINATE SYNTHASE"/>
    <property type="match status" value="1"/>
</dbReference>
<dbReference type="PANTHER" id="PTHR21090:SF5">
    <property type="entry name" value="PENTAFUNCTIONAL AROM POLYPEPTIDE"/>
    <property type="match status" value="1"/>
</dbReference>
<dbReference type="Pfam" id="PF00275">
    <property type="entry name" value="EPSP_synthase"/>
    <property type="match status" value="1"/>
</dbReference>
<dbReference type="PIRSF" id="PIRSF000505">
    <property type="entry name" value="EPSPS"/>
    <property type="match status" value="1"/>
</dbReference>
<dbReference type="SUPFAM" id="SSF55205">
    <property type="entry name" value="EPT/RTPC-like"/>
    <property type="match status" value="1"/>
</dbReference>
<dbReference type="PROSITE" id="PS00104">
    <property type="entry name" value="EPSP_SYNTHASE_1"/>
    <property type="match status" value="1"/>
</dbReference>
<dbReference type="PROSITE" id="PS00885">
    <property type="entry name" value="EPSP_SYNTHASE_2"/>
    <property type="match status" value="1"/>
</dbReference>
<organism>
    <name type="scientific">Xanthomonas campestris pv. campestris (strain B100)</name>
    <dbReference type="NCBI Taxonomy" id="509169"/>
    <lineage>
        <taxon>Bacteria</taxon>
        <taxon>Pseudomonadati</taxon>
        <taxon>Pseudomonadota</taxon>
        <taxon>Gammaproteobacteria</taxon>
        <taxon>Lysobacterales</taxon>
        <taxon>Lysobacteraceae</taxon>
        <taxon>Xanthomonas</taxon>
    </lineage>
</organism>
<evidence type="ECO:0000255" key="1">
    <source>
        <dbReference type="HAMAP-Rule" id="MF_00210"/>
    </source>
</evidence>
<name>AROA_XANCB</name>
<gene>
    <name evidence="1" type="primary">aroA</name>
    <name type="ordered locus">xcc-b100_2669</name>
</gene>
<feature type="chain" id="PRO_1000099766" description="3-phosphoshikimate 1-carboxyvinyltransferase">
    <location>
        <begin position="1"/>
        <end position="438"/>
    </location>
</feature>
<feature type="active site" description="Proton acceptor" evidence="1">
    <location>
        <position position="320"/>
    </location>
</feature>
<feature type="binding site" evidence="1">
    <location>
        <position position="26"/>
    </location>
    <ligand>
        <name>3-phosphoshikimate</name>
        <dbReference type="ChEBI" id="CHEBI:145989"/>
    </ligand>
</feature>
<feature type="binding site" evidence="1">
    <location>
        <position position="26"/>
    </location>
    <ligand>
        <name>phosphoenolpyruvate</name>
        <dbReference type="ChEBI" id="CHEBI:58702"/>
    </ligand>
</feature>
<feature type="binding site" evidence="1">
    <location>
        <position position="27"/>
    </location>
    <ligand>
        <name>3-phosphoshikimate</name>
        <dbReference type="ChEBI" id="CHEBI:145989"/>
    </ligand>
</feature>
<feature type="binding site" evidence="1">
    <location>
        <position position="31"/>
    </location>
    <ligand>
        <name>3-phosphoshikimate</name>
        <dbReference type="ChEBI" id="CHEBI:145989"/>
    </ligand>
</feature>
<feature type="binding site" evidence="1">
    <location>
        <position position="99"/>
    </location>
    <ligand>
        <name>phosphoenolpyruvate</name>
        <dbReference type="ChEBI" id="CHEBI:58702"/>
    </ligand>
</feature>
<feature type="binding site" evidence="1">
    <location>
        <position position="127"/>
    </location>
    <ligand>
        <name>phosphoenolpyruvate</name>
        <dbReference type="ChEBI" id="CHEBI:58702"/>
    </ligand>
</feature>
<feature type="binding site" evidence="1">
    <location>
        <position position="172"/>
    </location>
    <ligand>
        <name>3-phosphoshikimate</name>
        <dbReference type="ChEBI" id="CHEBI:145989"/>
    </ligand>
</feature>
<feature type="binding site" evidence="1">
    <location>
        <position position="174"/>
    </location>
    <ligand>
        <name>3-phosphoshikimate</name>
        <dbReference type="ChEBI" id="CHEBI:145989"/>
    </ligand>
</feature>
<feature type="binding site" evidence="1">
    <location>
        <position position="174"/>
    </location>
    <ligand>
        <name>phosphoenolpyruvate</name>
        <dbReference type="ChEBI" id="CHEBI:58702"/>
    </ligand>
</feature>
<feature type="binding site" evidence="1">
    <location>
        <position position="320"/>
    </location>
    <ligand>
        <name>3-phosphoshikimate</name>
        <dbReference type="ChEBI" id="CHEBI:145989"/>
    </ligand>
</feature>
<feature type="binding site" evidence="1">
    <location>
        <position position="347"/>
    </location>
    <ligand>
        <name>3-phosphoshikimate</name>
        <dbReference type="ChEBI" id="CHEBI:145989"/>
    </ligand>
</feature>
<feature type="binding site" evidence="1">
    <location>
        <position position="351"/>
    </location>
    <ligand>
        <name>phosphoenolpyruvate</name>
        <dbReference type="ChEBI" id="CHEBI:58702"/>
    </ligand>
</feature>
<feature type="binding site" evidence="1">
    <location>
        <position position="392"/>
    </location>
    <ligand>
        <name>phosphoenolpyruvate</name>
        <dbReference type="ChEBI" id="CHEBI:58702"/>
    </ligand>
</feature>
<proteinExistence type="inferred from homology"/>
<keyword id="KW-0028">Amino-acid biosynthesis</keyword>
<keyword id="KW-0057">Aromatic amino acid biosynthesis</keyword>
<keyword id="KW-0963">Cytoplasm</keyword>
<keyword id="KW-0808">Transferase</keyword>